<sequence>MNRGRGGFRGGRGGRTGPSQFQQGPPDTVLEMGAFMQACEGDIVCRSINVKIPYFNAPIYLENKTQIGKVDEILGPLNEVFFTIKPSEGVKADSFKEGDKFFIGPDKLLPLERFLPKPKEVGPKPKRKSGGAGGASRGGFGGRGGARGGFGGRGGARGGFGGRGGSRGGFSGGRGGSRGGFGGRGGSRGGFGGSRGGRGGRF</sequence>
<comment type="function">
    <text evidence="1">Non-catalytic component of the H/ACA small nucleolar ribonucleoprotein (H/ACA snoRNP), which catalyzes pseudouridylation of rRNA and is required for ribosome biogenesis. This involves the isomerization of uridine such that the ribose is subsequently attached to C5, instead of the normal N1. Pseudouridine ('psi') residues may serve to stabilize the conformation of rRNAs. The H/ACA snoRNP complex also mediates pseudouridylation of other types of RNAs. The H/ACA snoRNP complex mediates pseudouridylation at position 93 in U2 snRNA.</text>
</comment>
<comment type="subunit">
    <text evidence="1">Component of the small nucleolar ribonucleoprotein particles containing H/ACA-type snoRNAs (H/ACA snoRNPs).</text>
</comment>
<comment type="subcellular location">
    <subcellularLocation>
        <location evidence="1">Nucleus</location>
        <location evidence="1">Nucleolus</location>
    </subcellularLocation>
</comment>
<comment type="similarity">
    <text evidence="3">Belongs to the GAR1 family.</text>
</comment>
<dbReference type="EMBL" id="AAVQ01000002">
    <property type="protein sequence ID" value="EAZ63083.1"/>
    <property type="molecule type" value="Genomic_DNA"/>
</dbReference>
<dbReference type="RefSeq" id="XP_001387106.1">
    <property type="nucleotide sequence ID" value="XM_001387069.1"/>
</dbReference>
<dbReference type="SMR" id="A3GHP2"/>
<dbReference type="FunCoup" id="A3GHP2">
    <property type="interactions" value="631"/>
</dbReference>
<dbReference type="STRING" id="322104.A3GHP2"/>
<dbReference type="GeneID" id="4851791"/>
<dbReference type="KEGG" id="pic:PICST_75322"/>
<dbReference type="eggNOG" id="KOG3262">
    <property type="taxonomic scope" value="Eukaryota"/>
</dbReference>
<dbReference type="HOGENOM" id="CLU_080002_1_0_1"/>
<dbReference type="InParanoid" id="A3GHP2"/>
<dbReference type="OMA" id="KPQDGIV"/>
<dbReference type="OrthoDB" id="2187159at2759"/>
<dbReference type="Proteomes" id="UP000002258">
    <property type="component" value="Chromosome 1"/>
</dbReference>
<dbReference type="GO" id="GO:0031429">
    <property type="term" value="C:box H/ACA snoRNP complex"/>
    <property type="evidence" value="ECO:0007669"/>
    <property type="project" value="TreeGrafter"/>
</dbReference>
<dbReference type="GO" id="GO:0034513">
    <property type="term" value="F:box H/ACA snoRNA binding"/>
    <property type="evidence" value="ECO:0007669"/>
    <property type="project" value="TreeGrafter"/>
</dbReference>
<dbReference type="GO" id="GO:0000454">
    <property type="term" value="P:snoRNA guided rRNA pseudouridine synthesis"/>
    <property type="evidence" value="ECO:0007669"/>
    <property type="project" value="TreeGrafter"/>
</dbReference>
<dbReference type="FunFam" id="2.40.10.230:FF:000001">
    <property type="entry name" value="H/ACA ribonucleoprotein complex subunit"/>
    <property type="match status" value="1"/>
</dbReference>
<dbReference type="Gene3D" id="2.40.10.230">
    <property type="entry name" value="Probable tRNA pseudouridine synthase domain"/>
    <property type="match status" value="1"/>
</dbReference>
<dbReference type="InterPro" id="IPR038664">
    <property type="entry name" value="Gar1/Naf1_Cbf5-bd_sf"/>
</dbReference>
<dbReference type="InterPro" id="IPR007504">
    <property type="entry name" value="H/ACA_rnp_Gar1/Naf1"/>
</dbReference>
<dbReference type="InterPro" id="IPR009000">
    <property type="entry name" value="Transl_B-barrel_sf"/>
</dbReference>
<dbReference type="PANTHER" id="PTHR23237:SF6">
    <property type="entry name" value="H_ACA RIBONUCLEOPROTEIN COMPLEX SUBUNIT 1"/>
    <property type="match status" value="1"/>
</dbReference>
<dbReference type="PANTHER" id="PTHR23237">
    <property type="entry name" value="NUCLEOLAR PROTEIN FAMILY A MEMBER 1 SNORNP PROTEIN GAR1"/>
    <property type="match status" value="1"/>
</dbReference>
<dbReference type="Pfam" id="PF04410">
    <property type="entry name" value="Gar1"/>
    <property type="match status" value="1"/>
</dbReference>
<dbReference type="SUPFAM" id="SSF50447">
    <property type="entry name" value="Translation proteins"/>
    <property type="match status" value="1"/>
</dbReference>
<reference key="1">
    <citation type="journal article" date="2007" name="Nat. Biotechnol.">
        <title>Genome sequence of the lignocellulose-bioconverting and xylose-fermenting yeast Pichia stipitis.</title>
        <authorList>
            <person name="Jeffries T.W."/>
            <person name="Grigoriev I.V."/>
            <person name="Grimwood J."/>
            <person name="Laplaza J.M."/>
            <person name="Aerts A."/>
            <person name="Salamov A."/>
            <person name="Schmutz J."/>
            <person name="Lindquist E."/>
            <person name="Dehal P."/>
            <person name="Shapiro H."/>
            <person name="Jin Y.-S."/>
            <person name="Passoth V."/>
            <person name="Richardson P.M."/>
        </authorList>
    </citation>
    <scope>NUCLEOTIDE SEQUENCE [LARGE SCALE GENOMIC DNA]</scope>
    <source>
        <strain>ATCC 58785 / CBS 6054 / NBRC 10063 / NRRL Y-11545</strain>
    </source>
</reference>
<accession>A3GHP2</accession>
<name>GAR1_PICST</name>
<feature type="chain" id="PRO_0000327531" description="H/ACA ribonucleoprotein complex subunit GAR1">
    <location>
        <begin position="1"/>
        <end position="202"/>
    </location>
</feature>
<feature type="region of interest" description="Disordered" evidence="2">
    <location>
        <begin position="1"/>
        <end position="26"/>
    </location>
</feature>
<feature type="region of interest" description="RGG-box 1">
    <location>
        <begin position="5"/>
        <end position="17"/>
    </location>
</feature>
<feature type="region of interest" description="Disordered" evidence="2">
    <location>
        <begin position="113"/>
        <end position="202"/>
    </location>
</feature>
<feature type="region of interest" description="RGG-box 2">
    <location>
        <begin position="137"/>
        <end position="200"/>
    </location>
</feature>
<feature type="compositionally biased region" description="Gly residues" evidence="2">
    <location>
        <begin position="1"/>
        <end position="16"/>
    </location>
</feature>
<feature type="compositionally biased region" description="Basic and acidic residues" evidence="2">
    <location>
        <begin position="114"/>
        <end position="123"/>
    </location>
</feature>
<feature type="compositionally biased region" description="Gly residues" evidence="2">
    <location>
        <begin position="130"/>
        <end position="202"/>
    </location>
</feature>
<proteinExistence type="inferred from homology"/>
<evidence type="ECO:0000250" key="1">
    <source>
        <dbReference type="UniProtKB" id="P28007"/>
    </source>
</evidence>
<evidence type="ECO:0000256" key="2">
    <source>
        <dbReference type="SAM" id="MobiDB-lite"/>
    </source>
</evidence>
<evidence type="ECO:0000305" key="3"/>
<protein>
    <recommendedName>
        <fullName>H/ACA ribonucleoprotein complex subunit GAR1</fullName>
    </recommendedName>
    <alternativeName>
        <fullName>snoRNP protein GAR1</fullName>
    </alternativeName>
</protein>
<organism>
    <name type="scientific">Scheffersomyces stipitis (strain ATCC 58785 / CBS 6054 / NBRC 10063 / NRRL Y-11545)</name>
    <name type="common">Yeast</name>
    <name type="synonym">Pichia stipitis</name>
    <dbReference type="NCBI Taxonomy" id="322104"/>
    <lineage>
        <taxon>Eukaryota</taxon>
        <taxon>Fungi</taxon>
        <taxon>Dikarya</taxon>
        <taxon>Ascomycota</taxon>
        <taxon>Saccharomycotina</taxon>
        <taxon>Pichiomycetes</taxon>
        <taxon>Debaryomycetaceae</taxon>
        <taxon>Scheffersomyces</taxon>
    </lineage>
</organism>
<keyword id="KW-0539">Nucleus</keyword>
<keyword id="KW-1185">Reference proteome</keyword>
<keyword id="KW-0677">Repeat</keyword>
<keyword id="KW-0687">Ribonucleoprotein</keyword>
<keyword id="KW-0690">Ribosome biogenesis</keyword>
<keyword id="KW-0694">RNA-binding</keyword>
<keyword id="KW-0698">rRNA processing</keyword>
<gene>
    <name type="primary">GAR1</name>
    <name type="ORF">PICST_75322</name>
</gene>